<dbReference type="EMBL" id="CP000350">
    <property type="protein sequence ID" value="ABJ77059.1"/>
    <property type="molecule type" value="Genomic_DNA"/>
</dbReference>
<dbReference type="RefSeq" id="WP_000868428.1">
    <property type="nucleotide sequence ID" value="NC_008510.1"/>
</dbReference>
<dbReference type="SMR" id="Q04PW1"/>
<dbReference type="GeneID" id="61172973"/>
<dbReference type="KEGG" id="lbj:LBJ_2636"/>
<dbReference type="HOGENOM" id="CLU_135723_6_2_12"/>
<dbReference type="Proteomes" id="UP000000656">
    <property type="component" value="Chromosome 1"/>
</dbReference>
<dbReference type="GO" id="GO:0005737">
    <property type="term" value="C:cytoplasm"/>
    <property type="evidence" value="ECO:0007669"/>
    <property type="project" value="UniProtKB-ARBA"/>
</dbReference>
<dbReference type="GO" id="GO:1990904">
    <property type="term" value="C:ribonucleoprotein complex"/>
    <property type="evidence" value="ECO:0007669"/>
    <property type="project" value="UniProtKB-KW"/>
</dbReference>
<dbReference type="GO" id="GO:0005840">
    <property type="term" value="C:ribosome"/>
    <property type="evidence" value="ECO:0007669"/>
    <property type="project" value="UniProtKB-KW"/>
</dbReference>
<dbReference type="GO" id="GO:0003735">
    <property type="term" value="F:structural constituent of ribosome"/>
    <property type="evidence" value="ECO:0007669"/>
    <property type="project" value="InterPro"/>
</dbReference>
<dbReference type="GO" id="GO:0006412">
    <property type="term" value="P:translation"/>
    <property type="evidence" value="ECO:0007669"/>
    <property type="project" value="UniProtKB-UniRule"/>
</dbReference>
<dbReference type="HAMAP" id="MF_00251">
    <property type="entry name" value="Ribosomal_bL36"/>
    <property type="match status" value="1"/>
</dbReference>
<dbReference type="InterPro" id="IPR000473">
    <property type="entry name" value="Ribosomal_bL36"/>
</dbReference>
<dbReference type="InterPro" id="IPR035977">
    <property type="entry name" value="Ribosomal_bL36_sp"/>
</dbReference>
<dbReference type="NCBIfam" id="TIGR01022">
    <property type="entry name" value="rpmJ_bact"/>
    <property type="match status" value="1"/>
</dbReference>
<dbReference type="PANTHER" id="PTHR42888">
    <property type="entry name" value="50S RIBOSOMAL PROTEIN L36, CHLOROPLASTIC"/>
    <property type="match status" value="1"/>
</dbReference>
<dbReference type="PANTHER" id="PTHR42888:SF1">
    <property type="entry name" value="LARGE RIBOSOMAL SUBUNIT PROTEIN BL36C"/>
    <property type="match status" value="1"/>
</dbReference>
<dbReference type="Pfam" id="PF00444">
    <property type="entry name" value="Ribosomal_L36"/>
    <property type="match status" value="1"/>
</dbReference>
<dbReference type="SUPFAM" id="SSF57840">
    <property type="entry name" value="Ribosomal protein L36"/>
    <property type="match status" value="1"/>
</dbReference>
<dbReference type="PROSITE" id="PS00828">
    <property type="entry name" value="RIBOSOMAL_L36"/>
    <property type="match status" value="1"/>
</dbReference>
<feature type="chain" id="PRO_0000302231" description="Large ribosomal subunit protein bL36">
    <location>
        <begin position="1"/>
        <end position="37"/>
    </location>
</feature>
<accession>Q04PW1</accession>
<protein>
    <recommendedName>
        <fullName evidence="1">Large ribosomal subunit protein bL36</fullName>
    </recommendedName>
    <alternativeName>
        <fullName evidence="2">50S ribosomal protein L36</fullName>
    </alternativeName>
</protein>
<comment type="similarity">
    <text evidence="1">Belongs to the bacterial ribosomal protein bL36 family.</text>
</comment>
<keyword id="KW-0687">Ribonucleoprotein</keyword>
<keyword id="KW-0689">Ribosomal protein</keyword>
<evidence type="ECO:0000255" key="1">
    <source>
        <dbReference type="HAMAP-Rule" id="MF_00251"/>
    </source>
</evidence>
<evidence type="ECO:0000305" key="2"/>
<proteinExistence type="inferred from homology"/>
<organism>
    <name type="scientific">Leptospira borgpetersenii serovar Hardjo-bovis (strain JB197)</name>
    <dbReference type="NCBI Taxonomy" id="355277"/>
    <lineage>
        <taxon>Bacteria</taxon>
        <taxon>Pseudomonadati</taxon>
        <taxon>Spirochaetota</taxon>
        <taxon>Spirochaetia</taxon>
        <taxon>Leptospirales</taxon>
        <taxon>Leptospiraceae</taxon>
        <taxon>Leptospira</taxon>
    </lineage>
</organism>
<sequence>MKVRTSVKKICSSCKVIRRKGVIRVICTNPKHKQRQA</sequence>
<gene>
    <name evidence="1" type="primary">rpmJ</name>
    <name type="ordered locus">LBJ_2636</name>
</gene>
<name>RL36_LEPBJ</name>
<reference key="1">
    <citation type="journal article" date="2006" name="Proc. Natl. Acad. Sci. U.S.A.">
        <title>Genome reduction in Leptospira borgpetersenii reflects limited transmission potential.</title>
        <authorList>
            <person name="Bulach D.M."/>
            <person name="Zuerner R.L."/>
            <person name="Wilson P."/>
            <person name="Seemann T."/>
            <person name="McGrath A."/>
            <person name="Cullen P.A."/>
            <person name="Davis J."/>
            <person name="Johnson M."/>
            <person name="Kuczek E."/>
            <person name="Alt D.P."/>
            <person name="Peterson-Burch B."/>
            <person name="Coppel R.L."/>
            <person name="Rood J.I."/>
            <person name="Davies J.K."/>
            <person name="Adler B."/>
        </authorList>
    </citation>
    <scope>NUCLEOTIDE SEQUENCE [LARGE SCALE GENOMIC DNA]</scope>
    <source>
        <strain>JB197</strain>
    </source>
</reference>